<feature type="chain" id="PRO_1000048938" description="Large ribosomal subunit protein bL20">
    <location>
        <begin position="1"/>
        <end position="119"/>
    </location>
</feature>
<gene>
    <name evidence="1" type="primary">rplT</name>
    <name type="ordered locus">Bamb_1362</name>
</gene>
<reference key="1">
    <citation type="submission" date="2006-08" db="EMBL/GenBank/DDBJ databases">
        <title>Complete sequence of chromosome 1 of Burkholderia cepacia AMMD.</title>
        <authorList>
            <person name="Copeland A."/>
            <person name="Lucas S."/>
            <person name="Lapidus A."/>
            <person name="Barry K."/>
            <person name="Detter J.C."/>
            <person name="Glavina del Rio T."/>
            <person name="Hammon N."/>
            <person name="Israni S."/>
            <person name="Pitluck S."/>
            <person name="Bruce D."/>
            <person name="Chain P."/>
            <person name="Malfatti S."/>
            <person name="Shin M."/>
            <person name="Vergez L."/>
            <person name="Schmutz J."/>
            <person name="Larimer F."/>
            <person name="Land M."/>
            <person name="Hauser L."/>
            <person name="Kyrpides N."/>
            <person name="Kim E."/>
            <person name="Parke J."/>
            <person name="Coenye T."/>
            <person name="Konstantinidis K."/>
            <person name="Ramette A."/>
            <person name="Tiedje J."/>
            <person name="Richardson P."/>
        </authorList>
    </citation>
    <scope>NUCLEOTIDE SEQUENCE [LARGE SCALE GENOMIC DNA]</scope>
    <source>
        <strain>ATCC BAA-244 / DSM 16087 / CCUG 44356 / LMG 19182 / AMMD</strain>
    </source>
</reference>
<sequence length="119" mass="13658">MPRVKRGVTARARHKKIIKLAKGYRGRRNNVYRIAKQAVMRAGQYAYRDRRNKKRVFRALWITRINAAVRQHDMTYSVFINGLKKASIELDRKVLADMAVFDKAAFAAIVQQVKAAVAA</sequence>
<dbReference type="EMBL" id="CP000440">
    <property type="protein sequence ID" value="ABI86920.1"/>
    <property type="molecule type" value="Genomic_DNA"/>
</dbReference>
<dbReference type="RefSeq" id="WP_006052502.1">
    <property type="nucleotide sequence ID" value="NZ_CP009798.1"/>
</dbReference>
<dbReference type="SMR" id="Q0BG03"/>
<dbReference type="GeneID" id="97310577"/>
<dbReference type="KEGG" id="bam:Bamb_1362"/>
<dbReference type="PATRIC" id="fig|339670.21.peg.183"/>
<dbReference type="eggNOG" id="COG0292">
    <property type="taxonomic scope" value="Bacteria"/>
</dbReference>
<dbReference type="Proteomes" id="UP000000662">
    <property type="component" value="Chromosome 1"/>
</dbReference>
<dbReference type="GO" id="GO:1990904">
    <property type="term" value="C:ribonucleoprotein complex"/>
    <property type="evidence" value="ECO:0007669"/>
    <property type="project" value="UniProtKB-KW"/>
</dbReference>
<dbReference type="GO" id="GO:0005840">
    <property type="term" value="C:ribosome"/>
    <property type="evidence" value="ECO:0007669"/>
    <property type="project" value="UniProtKB-KW"/>
</dbReference>
<dbReference type="GO" id="GO:0019843">
    <property type="term" value="F:rRNA binding"/>
    <property type="evidence" value="ECO:0007669"/>
    <property type="project" value="UniProtKB-UniRule"/>
</dbReference>
<dbReference type="GO" id="GO:0003735">
    <property type="term" value="F:structural constituent of ribosome"/>
    <property type="evidence" value="ECO:0007669"/>
    <property type="project" value="InterPro"/>
</dbReference>
<dbReference type="GO" id="GO:0000027">
    <property type="term" value="P:ribosomal large subunit assembly"/>
    <property type="evidence" value="ECO:0007669"/>
    <property type="project" value="UniProtKB-UniRule"/>
</dbReference>
<dbReference type="GO" id="GO:0006412">
    <property type="term" value="P:translation"/>
    <property type="evidence" value="ECO:0007669"/>
    <property type="project" value="InterPro"/>
</dbReference>
<dbReference type="CDD" id="cd07026">
    <property type="entry name" value="Ribosomal_L20"/>
    <property type="match status" value="1"/>
</dbReference>
<dbReference type="FunFam" id="1.10.1900.20:FF:000001">
    <property type="entry name" value="50S ribosomal protein L20"/>
    <property type="match status" value="1"/>
</dbReference>
<dbReference type="Gene3D" id="6.10.160.10">
    <property type="match status" value="1"/>
</dbReference>
<dbReference type="Gene3D" id="1.10.1900.20">
    <property type="entry name" value="Ribosomal protein L20"/>
    <property type="match status" value="1"/>
</dbReference>
<dbReference type="HAMAP" id="MF_00382">
    <property type="entry name" value="Ribosomal_bL20"/>
    <property type="match status" value="1"/>
</dbReference>
<dbReference type="InterPro" id="IPR005813">
    <property type="entry name" value="Ribosomal_bL20"/>
</dbReference>
<dbReference type="InterPro" id="IPR049946">
    <property type="entry name" value="RIBOSOMAL_L20_CS"/>
</dbReference>
<dbReference type="InterPro" id="IPR035566">
    <property type="entry name" value="Ribosomal_protein_bL20_C"/>
</dbReference>
<dbReference type="NCBIfam" id="TIGR01032">
    <property type="entry name" value="rplT_bact"/>
    <property type="match status" value="1"/>
</dbReference>
<dbReference type="PANTHER" id="PTHR10986">
    <property type="entry name" value="39S RIBOSOMAL PROTEIN L20"/>
    <property type="match status" value="1"/>
</dbReference>
<dbReference type="Pfam" id="PF00453">
    <property type="entry name" value="Ribosomal_L20"/>
    <property type="match status" value="1"/>
</dbReference>
<dbReference type="PRINTS" id="PR00062">
    <property type="entry name" value="RIBOSOMALL20"/>
</dbReference>
<dbReference type="SUPFAM" id="SSF74731">
    <property type="entry name" value="Ribosomal protein L20"/>
    <property type="match status" value="1"/>
</dbReference>
<dbReference type="PROSITE" id="PS00937">
    <property type="entry name" value="RIBOSOMAL_L20"/>
    <property type="match status" value="1"/>
</dbReference>
<protein>
    <recommendedName>
        <fullName evidence="1">Large ribosomal subunit protein bL20</fullName>
    </recommendedName>
    <alternativeName>
        <fullName evidence="2">50S ribosomal protein L20</fullName>
    </alternativeName>
</protein>
<name>RL20_BURCM</name>
<comment type="function">
    <text evidence="1">Binds directly to 23S ribosomal RNA and is necessary for the in vitro assembly process of the 50S ribosomal subunit. It is not involved in the protein synthesizing functions of that subunit.</text>
</comment>
<comment type="similarity">
    <text evidence="1">Belongs to the bacterial ribosomal protein bL20 family.</text>
</comment>
<accession>Q0BG03</accession>
<keyword id="KW-0687">Ribonucleoprotein</keyword>
<keyword id="KW-0689">Ribosomal protein</keyword>
<keyword id="KW-0694">RNA-binding</keyword>
<keyword id="KW-0699">rRNA-binding</keyword>
<evidence type="ECO:0000255" key="1">
    <source>
        <dbReference type="HAMAP-Rule" id="MF_00382"/>
    </source>
</evidence>
<evidence type="ECO:0000305" key="2"/>
<organism>
    <name type="scientific">Burkholderia ambifaria (strain ATCC BAA-244 / DSM 16087 / CCUG 44356 / LMG 19182 / AMMD)</name>
    <name type="common">Burkholderia cepacia (strain AMMD)</name>
    <dbReference type="NCBI Taxonomy" id="339670"/>
    <lineage>
        <taxon>Bacteria</taxon>
        <taxon>Pseudomonadati</taxon>
        <taxon>Pseudomonadota</taxon>
        <taxon>Betaproteobacteria</taxon>
        <taxon>Burkholderiales</taxon>
        <taxon>Burkholderiaceae</taxon>
        <taxon>Burkholderia</taxon>
        <taxon>Burkholderia cepacia complex</taxon>
    </lineage>
</organism>
<proteinExistence type="inferred from homology"/>